<sequence length="295" mass="32397">MSSENKSPLLERARNLVPHLETERHKGQAGRIGIVGGSLEYTGAPYFAAISALKVGADLVHVFCPQAAAQVIKGYSPELIVHPLLDSNNAIIQIEPWLERLHVLVIGPGLGRDRLILQTVAELIRICRQLQKPLIIDADGLFLITQDIGLVKDYYGVILTPNAIEFCRLFGKDRDQTMASLGRLGAGVTVIEKGLNDRIYDSLTSEKYECPQGGSGRRCGGQGDLLAGALATFYYWALESKQEISPAMVACFAASTLTKTCNKYAFKAKGRSMTCSDMIDQIHQVFDDLFEHKKD</sequence>
<dbReference type="EC" id="4.2.1.93" evidence="1"/>
<dbReference type="EMBL" id="ADMH02002000">
    <property type="protein sequence ID" value="ETN60029.1"/>
    <property type="molecule type" value="Genomic_DNA"/>
</dbReference>
<dbReference type="SMR" id="E3XDZ8"/>
<dbReference type="FunCoup" id="E3XDZ8">
    <property type="interactions" value="248"/>
</dbReference>
<dbReference type="STRING" id="43151.E3XDZ8"/>
<dbReference type="EnsemblMetazoa" id="ADAC008360-RA">
    <property type="protein sequence ID" value="ADAC008360-PA"/>
    <property type="gene ID" value="ADAC008360"/>
</dbReference>
<dbReference type="VEuPathDB" id="VectorBase:ADAC008360"/>
<dbReference type="VEuPathDB" id="VectorBase:ADAR2_003990"/>
<dbReference type="eggNOG" id="KOG3974">
    <property type="taxonomic scope" value="Eukaryota"/>
</dbReference>
<dbReference type="HOGENOM" id="CLU_030651_3_0_1"/>
<dbReference type="InParanoid" id="E3XDZ8"/>
<dbReference type="OMA" id="WRAAYHN"/>
<dbReference type="Proteomes" id="UP000000673">
    <property type="component" value="Unassembled WGS sequence"/>
</dbReference>
<dbReference type="GO" id="GO:0005524">
    <property type="term" value="F:ATP binding"/>
    <property type="evidence" value="ECO:0007669"/>
    <property type="project" value="UniProtKB-KW"/>
</dbReference>
<dbReference type="GO" id="GO:0047453">
    <property type="term" value="F:ATP-dependent NAD(P)H-hydrate dehydratase activity"/>
    <property type="evidence" value="ECO:0007669"/>
    <property type="project" value="UniProtKB-UniRule"/>
</dbReference>
<dbReference type="GO" id="GO:0110051">
    <property type="term" value="P:metabolite repair"/>
    <property type="evidence" value="ECO:0007669"/>
    <property type="project" value="TreeGrafter"/>
</dbReference>
<dbReference type="GO" id="GO:0046496">
    <property type="term" value="P:nicotinamide nucleotide metabolic process"/>
    <property type="evidence" value="ECO:0007669"/>
    <property type="project" value="UniProtKB-UniRule"/>
</dbReference>
<dbReference type="CDD" id="cd01171">
    <property type="entry name" value="YXKO-related"/>
    <property type="match status" value="1"/>
</dbReference>
<dbReference type="FunFam" id="3.40.1190.20:FF:000023">
    <property type="entry name" value="ATP-dependent (S)-NAD(P)H-hydrate dehydratase"/>
    <property type="match status" value="1"/>
</dbReference>
<dbReference type="Gene3D" id="3.40.1190.20">
    <property type="match status" value="1"/>
</dbReference>
<dbReference type="HAMAP" id="MF_01965">
    <property type="entry name" value="NADHX_dehydratase"/>
    <property type="match status" value="1"/>
</dbReference>
<dbReference type="InterPro" id="IPR000631">
    <property type="entry name" value="CARKD"/>
</dbReference>
<dbReference type="InterPro" id="IPR029056">
    <property type="entry name" value="Ribokinase-like"/>
</dbReference>
<dbReference type="NCBIfam" id="TIGR00196">
    <property type="entry name" value="yjeF_cterm"/>
    <property type="match status" value="1"/>
</dbReference>
<dbReference type="PANTHER" id="PTHR12592:SF0">
    <property type="entry name" value="ATP-DEPENDENT (S)-NAD(P)H-HYDRATE DEHYDRATASE"/>
    <property type="match status" value="1"/>
</dbReference>
<dbReference type="PANTHER" id="PTHR12592">
    <property type="entry name" value="ATP-DEPENDENT (S)-NAD(P)H-HYDRATE DEHYDRATASE FAMILY MEMBER"/>
    <property type="match status" value="1"/>
</dbReference>
<dbReference type="Pfam" id="PF01256">
    <property type="entry name" value="Carb_kinase"/>
    <property type="match status" value="1"/>
</dbReference>
<dbReference type="SUPFAM" id="SSF53613">
    <property type="entry name" value="Ribokinase-like"/>
    <property type="match status" value="1"/>
</dbReference>
<dbReference type="PROSITE" id="PS51383">
    <property type="entry name" value="YJEF_C_3"/>
    <property type="match status" value="1"/>
</dbReference>
<comment type="function">
    <text evidence="1">Catalyzes the dehydration of the S-form of NAD(P)HX at the expense of ATP, which is converted to ADP. Together with NAD(P)HX epimerase, which catalyzes the epimerization of the S- and R-forms, the enzyme allows the repair of both epimers of NAD(P)HX, a damaged form of NAD(P)H that is a result of enzymatic or heat-dependent hydration.</text>
</comment>
<comment type="catalytic activity">
    <reaction evidence="1">
        <text>(6S)-NADHX + ATP = ADP + phosphate + NADH + H(+)</text>
        <dbReference type="Rhea" id="RHEA:19017"/>
        <dbReference type="ChEBI" id="CHEBI:15378"/>
        <dbReference type="ChEBI" id="CHEBI:30616"/>
        <dbReference type="ChEBI" id="CHEBI:43474"/>
        <dbReference type="ChEBI" id="CHEBI:57945"/>
        <dbReference type="ChEBI" id="CHEBI:64074"/>
        <dbReference type="ChEBI" id="CHEBI:456216"/>
        <dbReference type="EC" id="4.2.1.93"/>
    </reaction>
</comment>
<comment type="catalytic activity">
    <reaction>
        <text>(6S)-NADPHX + ATP = ADP + phosphate + NADPH + H(+)</text>
        <dbReference type="Rhea" id="RHEA:32231"/>
        <dbReference type="ChEBI" id="CHEBI:15378"/>
        <dbReference type="ChEBI" id="CHEBI:30616"/>
        <dbReference type="ChEBI" id="CHEBI:43474"/>
        <dbReference type="ChEBI" id="CHEBI:57783"/>
        <dbReference type="ChEBI" id="CHEBI:64076"/>
        <dbReference type="ChEBI" id="CHEBI:456216"/>
        <dbReference type="EC" id="4.2.1.93"/>
    </reaction>
</comment>
<comment type="cofactor">
    <cofactor evidence="1">
        <name>Mg(2+)</name>
        <dbReference type="ChEBI" id="CHEBI:18420"/>
    </cofactor>
</comment>
<comment type="similarity">
    <text evidence="1">Belongs to the NnrD/CARKD family.</text>
</comment>
<gene>
    <name evidence="2" type="ORF">AND_008360</name>
</gene>
<keyword id="KW-0067">ATP-binding</keyword>
<keyword id="KW-0456">Lyase</keyword>
<keyword id="KW-0520">NAD</keyword>
<keyword id="KW-0521">NADP</keyword>
<keyword id="KW-0547">Nucleotide-binding</keyword>
<keyword id="KW-0597">Phosphoprotein</keyword>
<keyword id="KW-1185">Reference proteome</keyword>
<accession>E3XDZ8</accession>
<accession>W5JB86</accession>
<evidence type="ECO:0000255" key="1">
    <source>
        <dbReference type="HAMAP-Rule" id="MF_03157"/>
    </source>
</evidence>
<evidence type="ECO:0000312" key="2">
    <source>
        <dbReference type="EMBL" id="ETN60029.1"/>
    </source>
</evidence>
<reference key="1">
    <citation type="journal article" date="2010" name="BMC Genomics">
        <title>Combination of measures distinguishes pre-miRNAs from other stem-loops in the genome of the newly sequenced Anopheles darlingi.</title>
        <authorList>
            <person name="Mendes N.D."/>
            <person name="Freitas A.T."/>
            <person name="Vasconcelos A.T."/>
            <person name="Sagot M.F."/>
        </authorList>
    </citation>
    <scope>NUCLEOTIDE SEQUENCE [LARGE SCALE GENOMIC DNA]</scope>
</reference>
<organism>
    <name type="scientific">Anopheles darlingi</name>
    <name type="common">Mosquito</name>
    <dbReference type="NCBI Taxonomy" id="43151"/>
    <lineage>
        <taxon>Eukaryota</taxon>
        <taxon>Metazoa</taxon>
        <taxon>Ecdysozoa</taxon>
        <taxon>Arthropoda</taxon>
        <taxon>Hexapoda</taxon>
        <taxon>Insecta</taxon>
        <taxon>Pterygota</taxon>
        <taxon>Neoptera</taxon>
        <taxon>Endopterygota</taxon>
        <taxon>Diptera</taxon>
        <taxon>Nematocera</taxon>
        <taxon>Culicoidea</taxon>
        <taxon>Culicidae</taxon>
        <taxon>Anophelinae</taxon>
        <taxon>Anopheles</taxon>
    </lineage>
</organism>
<feature type="chain" id="PRO_0000416164" description="ATP-dependent (S)-NAD(P)H-hydrate dehydratase">
    <location>
        <begin position="1"/>
        <end position="295"/>
    </location>
</feature>
<feature type="domain" description="YjeF C-terminal" evidence="1">
    <location>
        <begin position="9"/>
        <end position="289"/>
    </location>
</feature>
<feature type="binding site" evidence="1">
    <location>
        <position position="109"/>
    </location>
    <ligand>
        <name>(6S)-NADPHX</name>
        <dbReference type="ChEBI" id="CHEBI:64076"/>
    </ligand>
</feature>
<feature type="binding site" evidence="1">
    <location>
        <begin position="162"/>
        <end position="168"/>
    </location>
    <ligand>
        <name>(6S)-NADPHX</name>
        <dbReference type="ChEBI" id="CHEBI:64076"/>
    </ligand>
</feature>
<feature type="binding site" evidence="1">
    <location>
        <begin position="193"/>
        <end position="197"/>
    </location>
    <ligand>
        <name>ATP</name>
        <dbReference type="ChEBI" id="CHEBI:30616"/>
    </ligand>
</feature>
<feature type="binding site" evidence="1">
    <location>
        <begin position="214"/>
        <end position="223"/>
    </location>
    <ligand>
        <name>ATP</name>
        <dbReference type="ChEBI" id="CHEBI:30616"/>
    </ligand>
</feature>
<feature type="binding site" evidence="1">
    <location>
        <position position="224"/>
    </location>
    <ligand>
        <name>(6S)-NADPHX</name>
        <dbReference type="ChEBI" id="CHEBI:64076"/>
    </ligand>
</feature>
<name>NNRD_ANODA</name>
<protein>
    <recommendedName>
        <fullName evidence="1">ATP-dependent (S)-NAD(P)H-hydrate dehydratase</fullName>
        <ecNumber evidence="1">4.2.1.93</ecNumber>
    </recommendedName>
    <alternativeName>
        <fullName evidence="1">ATP-dependent NAD(P)HX dehydratase</fullName>
    </alternativeName>
</protein>
<proteinExistence type="inferred from homology"/>